<reference key="1">
    <citation type="submission" date="2007-08" db="EMBL/GenBank/DDBJ databases">
        <title>Complete sequence of Shewanella sediminis HAW-EB3.</title>
        <authorList>
            <consortium name="US DOE Joint Genome Institute"/>
            <person name="Copeland A."/>
            <person name="Lucas S."/>
            <person name="Lapidus A."/>
            <person name="Barry K."/>
            <person name="Glavina del Rio T."/>
            <person name="Dalin E."/>
            <person name="Tice H."/>
            <person name="Pitluck S."/>
            <person name="Chertkov O."/>
            <person name="Brettin T."/>
            <person name="Bruce D."/>
            <person name="Detter J.C."/>
            <person name="Han C."/>
            <person name="Schmutz J."/>
            <person name="Larimer F."/>
            <person name="Land M."/>
            <person name="Hauser L."/>
            <person name="Kyrpides N."/>
            <person name="Kim E."/>
            <person name="Zhao J.-S."/>
            <person name="Richardson P."/>
        </authorList>
    </citation>
    <scope>NUCLEOTIDE SEQUENCE [LARGE SCALE GENOMIC DNA]</scope>
    <source>
        <strain>HAW-EB3</strain>
    </source>
</reference>
<comment type="function">
    <text evidence="1">Protease subunit of a proteasome-like degradation complex believed to be a general protein degrading machinery.</text>
</comment>
<comment type="catalytic activity">
    <reaction evidence="1">
        <text>ATP-dependent cleavage of peptide bonds with broad specificity.</text>
        <dbReference type="EC" id="3.4.25.2"/>
    </reaction>
</comment>
<comment type="activity regulation">
    <text evidence="1">Allosterically activated by HslU binding.</text>
</comment>
<comment type="subunit">
    <text evidence="1">A double ring-shaped homohexamer of HslV is capped on each side by a ring-shaped HslU homohexamer. The assembly of the HslU/HslV complex is dependent on binding of ATP.</text>
</comment>
<comment type="subcellular location">
    <subcellularLocation>
        <location evidence="1">Cytoplasm</location>
    </subcellularLocation>
</comment>
<comment type="similarity">
    <text evidence="1">Belongs to the peptidase T1B family. HslV subfamily.</text>
</comment>
<keyword id="KW-0021">Allosteric enzyme</keyword>
<keyword id="KW-0963">Cytoplasm</keyword>
<keyword id="KW-0378">Hydrolase</keyword>
<keyword id="KW-0479">Metal-binding</keyword>
<keyword id="KW-0645">Protease</keyword>
<keyword id="KW-1185">Reference proteome</keyword>
<keyword id="KW-0915">Sodium</keyword>
<keyword id="KW-0888">Threonine protease</keyword>
<organism>
    <name type="scientific">Shewanella sediminis (strain HAW-EB3)</name>
    <dbReference type="NCBI Taxonomy" id="425104"/>
    <lineage>
        <taxon>Bacteria</taxon>
        <taxon>Pseudomonadati</taxon>
        <taxon>Pseudomonadota</taxon>
        <taxon>Gammaproteobacteria</taxon>
        <taxon>Alteromonadales</taxon>
        <taxon>Shewanellaceae</taxon>
        <taxon>Shewanella</taxon>
    </lineage>
</organism>
<dbReference type="EC" id="3.4.25.2" evidence="1"/>
<dbReference type="EMBL" id="CP000821">
    <property type="protein sequence ID" value="ABV35143.1"/>
    <property type="molecule type" value="Genomic_DNA"/>
</dbReference>
<dbReference type="RefSeq" id="WP_012140880.1">
    <property type="nucleotide sequence ID" value="NC_009831.1"/>
</dbReference>
<dbReference type="SMR" id="A8FQM0"/>
<dbReference type="STRING" id="425104.Ssed_0531"/>
<dbReference type="MEROPS" id="T01.006"/>
<dbReference type="KEGG" id="sse:Ssed_0531"/>
<dbReference type="eggNOG" id="COG5405">
    <property type="taxonomic scope" value="Bacteria"/>
</dbReference>
<dbReference type="HOGENOM" id="CLU_093872_1_0_6"/>
<dbReference type="OrthoDB" id="9804884at2"/>
<dbReference type="Proteomes" id="UP000002015">
    <property type="component" value="Chromosome"/>
</dbReference>
<dbReference type="GO" id="GO:0009376">
    <property type="term" value="C:HslUV protease complex"/>
    <property type="evidence" value="ECO:0007669"/>
    <property type="project" value="UniProtKB-UniRule"/>
</dbReference>
<dbReference type="GO" id="GO:0005839">
    <property type="term" value="C:proteasome core complex"/>
    <property type="evidence" value="ECO:0007669"/>
    <property type="project" value="InterPro"/>
</dbReference>
<dbReference type="GO" id="GO:0046872">
    <property type="term" value="F:metal ion binding"/>
    <property type="evidence" value="ECO:0007669"/>
    <property type="project" value="UniProtKB-KW"/>
</dbReference>
<dbReference type="GO" id="GO:0004298">
    <property type="term" value="F:threonine-type endopeptidase activity"/>
    <property type="evidence" value="ECO:0007669"/>
    <property type="project" value="UniProtKB-KW"/>
</dbReference>
<dbReference type="GO" id="GO:0051603">
    <property type="term" value="P:proteolysis involved in protein catabolic process"/>
    <property type="evidence" value="ECO:0007669"/>
    <property type="project" value="InterPro"/>
</dbReference>
<dbReference type="CDD" id="cd01913">
    <property type="entry name" value="protease_HslV"/>
    <property type="match status" value="1"/>
</dbReference>
<dbReference type="FunFam" id="3.60.20.10:FF:000002">
    <property type="entry name" value="ATP-dependent protease subunit HslV"/>
    <property type="match status" value="1"/>
</dbReference>
<dbReference type="Gene3D" id="3.60.20.10">
    <property type="entry name" value="Glutamine Phosphoribosylpyrophosphate, subunit 1, domain 1"/>
    <property type="match status" value="1"/>
</dbReference>
<dbReference type="HAMAP" id="MF_00248">
    <property type="entry name" value="HslV"/>
    <property type="match status" value="1"/>
</dbReference>
<dbReference type="InterPro" id="IPR022281">
    <property type="entry name" value="ATP-dep_Prtase_HsIV_su"/>
</dbReference>
<dbReference type="InterPro" id="IPR029055">
    <property type="entry name" value="Ntn_hydrolases_N"/>
</dbReference>
<dbReference type="InterPro" id="IPR001353">
    <property type="entry name" value="Proteasome_sua/b"/>
</dbReference>
<dbReference type="InterPro" id="IPR023333">
    <property type="entry name" value="Proteasome_suB-type"/>
</dbReference>
<dbReference type="NCBIfam" id="TIGR03692">
    <property type="entry name" value="ATP_dep_HslV"/>
    <property type="match status" value="1"/>
</dbReference>
<dbReference type="NCBIfam" id="NF003964">
    <property type="entry name" value="PRK05456.1"/>
    <property type="match status" value="1"/>
</dbReference>
<dbReference type="PANTHER" id="PTHR32194:SF0">
    <property type="entry name" value="ATP-DEPENDENT PROTEASE SUBUNIT HSLV"/>
    <property type="match status" value="1"/>
</dbReference>
<dbReference type="PANTHER" id="PTHR32194">
    <property type="entry name" value="METALLOPROTEASE TLDD"/>
    <property type="match status" value="1"/>
</dbReference>
<dbReference type="Pfam" id="PF00227">
    <property type="entry name" value="Proteasome"/>
    <property type="match status" value="1"/>
</dbReference>
<dbReference type="PIRSF" id="PIRSF039093">
    <property type="entry name" value="HslV"/>
    <property type="match status" value="1"/>
</dbReference>
<dbReference type="SUPFAM" id="SSF56235">
    <property type="entry name" value="N-terminal nucleophile aminohydrolases (Ntn hydrolases)"/>
    <property type="match status" value="1"/>
</dbReference>
<dbReference type="PROSITE" id="PS51476">
    <property type="entry name" value="PROTEASOME_BETA_2"/>
    <property type="match status" value="1"/>
</dbReference>
<protein>
    <recommendedName>
        <fullName evidence="1">ATP-dependent protease subunit HslV</fullName>
        <ecNumber evidence="1">3.4.25.2</ecNumber>
    </recommendedName>
</protein>
<sequence length="174" mass="18878">MTTIVSVRRNNQVVIAGDGQVSLGNTVMKGNARKVRRLYHNKVLAGFAGGTADAFTLFERFEAKLEMHQGHLMKAAVEMAKDWRSDKMLRKLEALLAVADDTCSLIITGNGDVVQPENDLISIGSGGNFAQSAATALLENTELSALEIAEKSLTIAGDICVFTNQFKTIEELNY</sequence>
<proteinExistence type="inferred from homology"/>
<gene>
    <name evidence="1" type="primary">hslV</name>
    <name type="ordered locus">Ssed_0531</name>
</gene>
<accession>A8FQM0</accession>
<evidence type="ECO:0000255" key="1">
    <source>
        <dbReference type="HAMAP-Rule" id="MF_00248"/>
    </source>
</evidence>
<name>HSLV_SHESH</name>
<feature type="chain" id="PRO_1000078431" description="ATP-dependent protease subunit HslV">
    <location>
        <begin position="1"/>
        <end position="174"/>
    </location>
</feature>
<feature type="active site" evidence="1">
    <location>
        <position position="2"/>
    </location>
</feature>
<feature type="binding site" evidence="1">
    <location>
        <position position="157"/>
    </location>
    <ligand>
        <name>Na(+)</name>
        <dbReference type="ChEBI" id="CHEBI:29101"/>
    </ligand>
</feature>
<feature type="binding site" evidence="1">
    <location>
        <position position="160"/>
    </location>
    <ligand>
        <name>Na(+)</name>
        <dbReference type="ChEBI" id="CHEBI:29101"/>
    </ligand>
</feature>
<feature type="binding site" evidence="1">
    <location>
        <position position="163"/>
    </location>
    <ligand>
        <name>Na(+)</name>
        <dbReference type="ChEBI" id="CHEBI:29101"/>
    </ligand>
</feature>